<reference key="1">
    <citation type="journal article" date="2020" name="Mol. Plant Microbe Interact.">
        <title>Chromosome-scale genome assembly of Talaromyces rugulosus W13939, a mycoparasitic fungus and promising biocontrol agent.</title>
        <authorList>
            <person name="Wang B."/>
            <person name="Guo L."/>
            <person name="Ye K."/>
            <person name="Wang L."/>
        </authorList>
    </citation>
    <scope>NUCLEOTIDE SEQUENCE [LARGE SCALE GENOMIC DNA]</scope>
    <source>
        <strain>W13939</strain>
    </source>
</reference>
<reference key="2">
    <citation type="journal article" date="2024" name="Biotechnol. Biofuels Bioprod.">
        <title>A novel AA14 LPMO from Talaromyces rugulosus with bifunctional cellulolytic/hemicellulolytic activity boosted cellulose hydrolysis.</title>
        <authorList>
            <person name="Chen K."/>
            <person name="Zhao X."/>
            <person name="Zhang P."/>
            <person name="Long L."/>
            <person name="Ding S."/>
        </authorList>
    </citation>
    <scope>FUNCTION</scope>
</reference>
<feature type="signal peptide" evidence="4">
    <location>
        <begin position="1"/>
        <end position="20"/>
    </location>
</feature>
<feature type="chain" id="PRO_5028939182" description="AA14 family lytic polysaccharide monooxygenase B">
    <location>
        <begin position="21"/>
        <end position="284"/>
    </location>
</feature>
<feature type="glycosylation site" description="N-linked (GlcNAc...) asparagine" evidence="5">
    <location>
        <position position="42"/>
    </location>
</feature>
<feature type="glycosylation site" description="N-linked (GlcNAc...) asparagine" evidence="5">
    <location>
        <position position="96"/>
    </location>
</feature>
<feature type="glycosylation site" description="N-linked (GlcNAc...) asparagine" evidence="5">
    <location>
        <position position="142"/>
    </location>
</feature>
<feature type="glycosylation site" description="N-linked (GlcNAc...) asparagine" evidence="5">
    <location>
        <position position="183"/>
    </location>
</feature>
<feature type="disulfide bond" evidence="2">
    <location>
        <begin position="197"/>
        <end position="218"/>
    </location>
</feature>
<proteinExistence type="inferred from homology"/>
<dbReference type="EC" id="1.14.99.-" evidence="6"/>
<dbReference type="EMBL" id="CP055903">
    <property type="protein sequence ID" value="QKX64748.1"/>
    <property type="molecule type" value="Genomic_DNA"/>
</dbReference>
<dbReference type="SMR" id="A0A7H8RFC2"/>
<dbReference type="OrthoDB" id="2019572at2759"/>
<dbReference type="Proteomes" id="UP000509510">
    <property type="component" value="Chromosome VI"/>
</dbReference>
<dbReference type="GO" id="GO:0005576">
    <property type="term" value="C:extracellular region"/>
    <property type="evidence" value="ECO:0007669"/>
    <property type="project" value="UniProtKB-SubCell"/>
</dbReference>
<dbReference type="GO" id="GO:0046872">
    <property type="term" value="F:metal ion binding"/>
    <property type="evidence" value="ECO:0007669"/>
    <property type="project" value="UniProtKB-KW"/>
</dbReference>
<dbReference type="GO" id="GO:0004497">
    <property type="term" value="F:monooxygenase activity"/>
    <property type="evidence" value="ECO:0007669"/>
    <property type="project" value="UniProtKB-KW"/>
</dbReference>
<dbReference type="InterPro" id="IPR054497">
    <property type="entry name" value="LPMO_AA14"/>
</dbReference>
<dbReference type="Pfam" id="PF22810">
    <property type="entry name" value="LPMO_AA14"/>
    <property type="match status" value="1"/>
</dbReference>
<comment type="function">
    <text evidence="3 9">Lytic polysaccharide monooxygenase (LPMO) that plays decomposes some specific network structures formed between cellulose and hemicellulose in the plant cell walls (Probable). Catalysis by LPMOs requires the reduction of the active-site copper from Cu(II) to Cu(I) by a reducing agent and H(2)O(2) or O(2) as a cosubstrate (By similarity).</text>
</comment>
<comment type="cofactor">
    <cofactor evidence="3">
        <name>Cu(2+)</name>
        <dbReference type="ChEBI" id="CHEBI:29036"/>
    </cofactor>
    <text evidence="3">Binds 1 copper ion per subunit.</text>
</comment>
<comment type="subcellular location">
    <subcellularLocation>
        <location evidence="1">Secreted</location>
    </subcellularLocation>
</comment>
<comment type="similarity">
    <text evidence="8">Belongs to the polysaccharide monooxygenase AA14 family.</text>
</comment>
<protein>
    <recommendedName>
        <fullName evidence="7">AA14 family lytic polysaccharide monooxygenase B</fullName>
        <shortName evidence="7">LPMO AA14B</shortName>
        <ecNumber evidence="6">1.14.99.-</ecNumber>
    </recommendedName>
</protein>
<sequence>MGYLSKLVTSVVFAIPLASAHLAAYTPGMYCPENSYKGTLTNATDPNLVVFDPLYNLPGDSWFLSKGRNCLLAEPTGVWEIAANTIISVPWANWQNSTGYYADGKEYNERPIPYSVTNPEVIAEGLVSESKGLASPNLHAANKSTAAGTAIAISYESNIWAVTMDTLVVISTAPQTPFERLANYSIPDLAPCKECICVTGWVPDGFGQQNMYMAAHKCKITNPTGGKIPKTPSSVPGPGVKGAKQMIAAFQSEGNNVEWNGGEVVPTYSTRMGYLVGAQTDIFD</sequence>
<keyword id="KW-0186">Copper</keyword>
<keyword id="KW-1015">Disulfide bond</keyword>
<keyword id="KW-0325">Glycoprotein</keyword>
<keyword id="KW-0479">Metal-binding</keyword>
<keyword id="KW-0503">Monooxygenase</keyword>
<keyword id="KW-0560">Oxidoreductase</keyword>
<keyword id="KW-1185">Reference proteome</keyword>
<keyword id="KW-0964">Secreted</keyword>
<keyword id="KW-0732">Signal</keyword>
<name>LP14B_TALRU</name>
<gene>
    <name evidence="7" type="primary">AA14B</name>
    <name type="ORF">TRUGW13939_11924</name>
</gene>
<accession>A0A7H8RFC2</accession>
<evidence type="ECO:0000250" key="1">
    <source>
        <dbReference type="UniProtKB" id="A0A2I6QAZ5"/>
    </source>
</evidence>
<evidence type="ECO:0000250" key="2">
    <source>
        <dbReference type="UniProtKB" id="A0A2I6QB00"/>
    </source>
</evidence>
<evidence type="ECO:0000250" key="3">
    <source>
        <dbReference type="UniProtKB" id="A0A7H8R162"/>
    </source>
</evidence>
<evidence type="ECO:0000255" key="4"/>
<evidence type="ECO:0000255" key="5">
    <source>
        <dbReference type="PROSITE-ProRule" id="PRU00498"/>
    </source>
</evidence>
<evidence type="ECO:0000269" key="6">
    <source>
    </source>
</evidence>
<evidence type="ECO:0000303" key="7">
    <source>
    </source>
</evidence>
<evidence type="ECO:0000305" key="8"/>
<evidence type="ECO:0000305" key="9">
    <source>
    </source>
</evidence>
<organism>
    <name type="scientific">Talaromyces rugulosus</name>
    <name type="common">Penicillium rugulosum</name>
    <dbReference type="NCBI Taxonomy" id="121627"/>
    <lineage>
        <taxon>Eukaryota</taxon>
        <taxon>Fungi</taxon>
        <taxon>Dikarya</taxon>
        <taxon>Ascomycota</taxon>
        <taxon>Pezizomycotina</taxon>
        <taxon>Eurotiomycetes</taxon>
        <taxon>Eurotiomycetidae</taxon>
        <taxon>Eurotiales</taxon>
        <taxon>Trichocomaceae</taxon>
        <taxon>Talaromyces</taxon>
        <taxon>Talaromyces sect. Islandici</taxon>
    </lineage>
</organism>